<proteinExistence type="evidence at protein level"/>
<name>BH100_ARATH</name>
<accession>Q9ZVB5</accession>
<accession>Q3E7M6</accession>
<feature type="chain" id="PRO_0000358789" description="Transcription factor bHLH100">
    <location>
        <begin position="1"/>
        <end position="242"/>
    </location>
</feature>
<feature type="domain" description="bHLH" evidence="1">
    <location>
        <begin position="61"/>
        <end position="113"/>
    </location>
</feature>
<feature type="splice variant" id="VSP_036095" description="In isoform 2." evidence="5">
    <location>
        <position position="96"/>
    </location>
</feature>
<feature type="sequence conflict" description="In Ref. 4; AF488626." evidence="6" ref="4">
    <original>Q</original>
    <variation>R</variation>
    <location>
        <position position="215"/>
    </location>
</feature>
<organism>
    <name type="scientific">Arabidopsis thaliana</name>
    <name type="common">Mouse-ear cress</name>
    <dbReference type="NCBI Taxonomy" id="3702"/>
    <lineage>
        <taxon>Eukaryota</taxon>
        <taxon>Viridiplantae</taxon>
        <taxon>Streptophyta</taxon>
        <taxon>Embryophyta</taxon>
        <taxon>Tracheophyta</taxon>
        <taxon>Spermatophyta</taxon>
        <taxon>Magnoliopsida</taxon>
        <taxon>eudicotyledons</taxon>
        <taxon>Gunneridae</taxon>
        <taxon>Pentapetalae</taxon>
        <taxon>rosids</taxon>
        <taxon>malvids</taxon>
        <taxon>Brassicales</taxon>
        <taxon>Brassicaceae</taxon>
        <taxon>Camelineae</taxon>
        <taxon>Arabidopsis</taxon>
    </lineage>
</organism>
<keyword id="KW-0025">Alternative splicing</keyword>
<keyword id="KW-0238">DNA-binding</keyword>
<keyword id="KW-0539">Nucleus</keyword>
<keyword id="KW-1185">Reference proteome</keyword>
<keyword id="KW-0804">Transcription</keyword>
<keyword id="KW-0805">Transcription regulation</keyword>
<sequence>MCALVPPLYPNFGWPCGDHSFYETDDVSNTFLDFPLPDLTVTHENVSSENNRTLLDNPVVMKKLNHNASERERRKKINTMFSSLRSCLPPTNQTKKLSVSATVSQALKYIPELQEQVKKLMKKKEELSFQISGQRDLVYTDQNSKSEEGVTSYASTVSSTRLSETEVMVQISSLQTEKCSFGNVLSGVEEDGLVLVGASSSRSHGERLFYSMHLQIKNGQVNSEELGDRLLYLYEKCGHSFT</sequence>
<evidence type="ECO:0000255" key="1">
    <source>
        <dbReference type="PROSITE-ProRule" id="PRU00981"/>
    </source>
</evidence>
<evidence type="ECO:0000269" key="2">
    <source>
    </source>
</evidence>
<evidence type="ECO:0000269" key="3">
    <source>
    </source>
</evidence>
<evidence type="ECO:0000269" key="4">
    <source>
    </source>
</evidence>
<evidence type="ECO:0000303" key="5">
    <source>
    </source>
</evidence>
<evidence type="ECO:0000305" key="6"/>
<reference key="1">
    <citation type="journal article" date="1999" name="Nature">
        <title>Sequence and analysis of chromosome 2 of the plant Arabidopsis thaliana.</title>
        <authorList>
            <person name="Lin X."/>
            <person name="Kaul S."/>
            <person name="Rounsley S.D."/>
            <person name="Shea T.P."/>
            <person name="Benito M.-I."/>
            <person name="Town C.D."/>
            <person name="Fujii C.Y."/>
            <person name="Mason T.M."/>
            <person name="Bowman C.L."/>
            <person name="Barnstead M.E."/>
            <person name="Feldblyum T.V."/>
            <person name="Buell C.R."/>
            <person name="Ketchum K.A."/>
            <person name="Lee J.J."/>
            <person name="Ronning C.M."/>
            <person name="Koo H.L."/>
            <person name="Moffat K.S."/>
            <person name="Cronin L.A."/>
            <person name="Shen M."/>
            <person name="Pai G."/>
            <person name="Van Aken S."/>
            <person name="Umayam L."/>
            <person name="Tallon L.J."/>
            <person name="Gill J.E."/>
            <person name="Adams M.D."/>
            <person name="Carrera A.J."/>
            <person name="Creasy T.H."/>
            <person name="Goodman H.M."/>
            <person name="Somerville C.R."/>
            <person name="Copenhaver G.P."/>
            <person name="Preuss D."/>
            <person name="Nierman W.C."/>
            <person name="White O."/>
            <person name="Eisen J.A."/>
            <person name="Salzberg S.L."/>
            <person name="Fraser C.M."/>
            <person name="Venter J.C."/>
        </authorList>
    </citation>
    <scope>NUCLEOTIDE SEQUENCE [LARGE SCALE GENOMIC DNA]</scope>
    <source>
        <strain>cv. Columbia</strain>
    </source>
</reference>
<reference key="2">
    <citation type="journal article" date="2017" name="Plant J.">
        <title>Araport11: a complete reannotation of the Arabidopsis thaliana reference genome.</title>
        <authorList>
            <person name="Cheng C.Y."/>
            <person name="Krishnakumar V."/>
            <person name="Chan A.P."/>
            <person name="Thibaud-Nissen F."/>
            <person name="Schobel S."/>
            <person name="Town C.D."/>
        </authorList>
    </citation>
    <scope>GENOME REANNOTATION</scope>
    <source>
        <strain>cv. Columbia</strain>
    </source>
</reference>
<reference key="3">
    <citation type="journal article" date="2003" name="Science">
        <title>Empirical analysis of transcriptional activity in the Arabidopsis genome.</title>
        <authorList>
            <person name="Yamada K."/>
            <person name="Lim J."/>
            <person name="Dale J.M."/>
            <person name="Chen H."/>
            <person name="Shinn P."/>
            <person name="Palm C.J."/>
            <person name="Southwick A.M."/>
            <person name="Wu H.C."/>
            <person name="Kim C.J."/>
            <person name="Nguyen M."/>
            <person name="Pham P.K."/>
            <person name="Cheuk R.F."/>
            <person name="Karlin-Newmann G."/>
            <person name="Liu S.X."/>
            <person name="Lam B."/>
            <person name="Sakano H."/>
            <person name="Wu T."/>
            <person name="Yu G."/>
            <person name="Miranda M."/>
            <person name="Quach H.L."/>
            <person name="Tripp M."/>
            <person name="Chang C.H."/>
            <person name="Lee J.M."/>
            <person name="Toriumi M.J."/>
            <person name="Chan M.M."/>
            <person name="Tang C.C."/>
            <person name="Onodera C.S."/>
            <person name="Deng J.M."/>
            <person name="Akiyama K."/>
            <person name="Ansari Y."/>
            <person name="Arakawa T."/>
            <person name="Banh J."/>
            <person name="Banno F."/>
            <person name="Bowser L."/>
            <person name="Brooks S.Y."/>
            <person name="Carninci P."/>
            <person name="Chao Q."/>
            <person name="Choy N."/>
            <person name="Enju A."/>
            <person name="Goldsmith A.D."/>
            <person name="Gurjal M."/>
            <person name="Hansen N.F."/>
            <person name="Hayashizaki Y."/>
            <person name="Johnson-Hopson C."/>
            <person name="Hsuan V.W."/>
            <person name="Iida K."/>
            <person name="Karnes M."/>
            <person name="Khan S."/>
            <person name="Koesema E."/>
            <person name="Ishida J."/>
            <person name="Jiang P.X."/>
            <person name="Jones T."/>
            <person name="Kawai J."/>
            <person name="Kamiya A."/>
            <person name="Meyers C."/>
            <person name="Nakajima M."/>
            <person name="Narusaka M."/>
            <person name="Seki M."/>
            <person name="Sakurai T."/>
            <person name="Satou M."/>
            <person name="Tamse R."/>
            <person name="Vaysberg M."/>
            <person name="Wallender E.K."/>
            <person name="Wong C."/>
            <person name="Yamamura Y."/>
            <person name="Yuan S."/>
            <person name="Shinozaki K."/>
            <person name="Davis R.W."/>
            <person name="Theologis A."/>
            <person name="Ecker J.R."/>
        </authorList>
    </citation>
    <scope>NUCLEOTIDE SEQUENCE [LARGE SCALE MRNA] (ISOFORM 1)</scope>
    <source>
        <strain>cv. Columbia</strain>
    </source>
</reference>
<reference key="4">
    <citation type="journal article" date="2003" name="Mol. Biol. Evol.">
        <title>The basic helix-loop-helix transcription factor family in plants: a genome-wide study of protein structure and functional diversity.</title>
        <authorList>
            <person name="Heim M.A."/>
            <person name="Jakoby M."/>
            <person name="Werber M."/>
            <person name="Martin C."/>
            <person name="Weisshaar B."/>
            <person name="Bailey P.C."/>
        </authorList>
    </citation>
    <scope>NUCLEOTIDE SEQUENCE [MRNA] OF 17-242 (ISOFORM 2)</scope>
    <scope>TISSUE SPECIFICITY</scope>
    <scope>INDUCTION</scope>
    <scope>GENE FAMILY</scope>
    <scope>NOMENCLATURE</scope>
    <source>
        <strain>cv. Columbia</strain>
    </source>
</reference>
<reference key="5">
    <citation type="journal article" date="2003" name="Plant Cell">
        <title>The Arabidopsis basic/helix-loop-helix transcription factor family.</title>
        <authorList>
            <person name="Toledo-Ortiz G."/>
            <person name="Huq E."/>
            <person name="Quail P.H."/>
        </authorList>
    </citation>
    <scope>GENE FAMILY</scope>
</reference>
<reference key="6">
    <citation type="journal article" date="2003" name="Plant Cell">
        <title>Update on the basic helix-loop-helix transcription factor gene family in Arabidopsis thaliana.</title>
        <authorList>
            <person name="Bailey P.C."/>
            <person name="Martin C."/>
            <person name="Toledo-Ortiz G."/>
            <person name="Quail P.H."/>
            <person name="Huq E."/>
            <person name="Heim M.A."/>
            <person name="Jakoby M."/>
            <person name="Werber M."/>
            <person name="Weisshaar B."/>
        </authorList>
    </citation>
    <scope>GENE FAMILY</scope>
    <scope>NOMENCLATURE</scope>
</reference>
<reference key="7">
    <citation type="journal article" date="2007" name="Planta">
        <title>Iron deficiency-mediated stress regulation of four subgroup Ib BHLH genes in Arabidopsis thaliana.</title>
        <authorList>
            <person name="Wang H.-Y."/>
            <person name="Klatte M."/>
            <person name="Jakoby M."/>
            <person name="Baeumlein H."/>
            <person name="Weisshaar B."/>
            <person name="Bauer P."/>
        </authorList>
    </citation>
    <scope>INDUCTION</scope>
</reference>
<reference key="8">
    <citation type="journal article" date="2008" name="Plant Cell Environ.">
        <title>Expression differences for genes involved in lignin, glutathione and sulphate metabolism in response to cadmium in Arabidopsis thaliana and the related Zn/Cd-hyperaccumulator Thlaspi caerulescens.</title>
        <authorList>
            <person name="van de Mortel J.E."/>
            <person name="Schat H."/>
            <person name="Moerland P.D."/>
            <person name="Ver Loren van Themaat E."/>
            <person name="van der Ent S."/>
            <person name="Blankestijn H."/>
            <person name="Ghandilyan A."/>
            <person name="Tsiatsiani S."/>
            <person name="Aarts M.G.M."/>
        </authorList>
    </citation>
    <scope>FUNCTION</scope>
    <scope>INDUCTION</scope>
</reference>
<gene>
    <name type="primary">BHLH100</name>
    <name type="synonym">EN7</name>
    <name type="ordered locus">At2g41240</name>
    <name type="ORF">F13H10.21</name>
</gene>
<comment type="function">
    <text evidence="4">Plays a role in metal homeostasis. Confers tolerance to high zinc (Zn) and nickel (Ni).</text>
</comment>
<comment type="subunit">
    <text evidence="6">Homodimer.</text>
</comment>
<comment type="interaction">
    <interactant intactId="EBI-15198769">
        <id>Q9ZVB5</id>
    </interactant>
    <interactant intactId="EBI-1640543">
        <id>Q0V7X4</id>
        <label>FIT</label>
    </interactant>
    <organismsDiffer>false</organismsDiffer>
    <experiments>3</experiments>
</comment>
<comment type="subcellular location">
    <subcellularLocation>
        <location evidence="1">Nucleus</location>
    </subcellularLocation>
</comment>
<comment type="alternative products">
    <event type="alternative splicing"/>
    <isoform>
        <id>Q9ZVB5-1</id>
        <name>1</name>
        <sequence type="displayed"/>
    </isoform>
    <isoform>
        <id>Q9ZVB5-2</id>
        <name>2</name>
        <sequence type="described" ref="VSP_036095"/>
    </isoform>
</comment>
<comment type="tissue specificity">
    <text evidence="2">Expressed constitutively in roots, leaves, and stems.</text>
</comment>
<comment type="induction">
    <text evidence="2 3 4">Up regulated by iron deficiency in roots and leaves, as well as by nickel, high zinc or high copper treatments. Repressed by heat treatment, high iron, low copper and low zinc treatments.</text>
</comment>
<comment type="miscellaneous">
    <molecule>Isoform 2</molecule>
    <text evidence="6">May be due to a competing acceptor splice site.</text>
</comment>
<protein>
    <recommendedName>
        <fullName>Transcription factor bHLH100</fullName>
    </recommendedName>
    <alternativeName>
        <fullName>Basic helix-loop-helix protein 100</fullName>
        <shortName>AtbHLH100</shortName>
        <shortName>bHLH 100</shortName>
    </alternativeName>
    <alternativeName>
        <fullName>Transcription factor EN 7</fullName>
    </alternativeName>
    <alternativeName>
        <fullName>bHLH transcription factor bHLH100</fullName>
    </alternativeName>
</protein>
<dbReference type="EMBL" id="AC005662">
    <property type="protein sequence ID" value="AAC78547.1"/>
    <property type="molecule type" value="Genomic_DNA"/>
</dbReference>
<dbReference type="EMBL" id="CP002685">
    <property type="protein sequence ID" value="AEC09951.1"/>
    <property type="molecule type" value="Genomic_DNA"/>
</dbReference>
<dbReference type="EMBL" id="CP002685">
    <property type="protein sequence ID" value="AEC09952.1"/>
    <property type="molecule type" value="Genomic_DNA"/>
</dbReference>
<dbReference type="EMBL" id="AY074635">
    <property type="protein sequence ID" value="AAL69451.1"/>
    <property type="molecule type" value="mRNA"/>
</dbReference>
<dbReference type="EMBL" id="AF488626">
    <property type="status" value="NOT_ANNOTATED_CDS"/>
    <property type="molecule type" value="mRNA"/>
</dbReference>
<dbReference type="PIR" id="E84839">
    <property type="entry name" value="E84839"/>
</dbReference>
<dbReference type="RefSeq" id="NP_181657.1">
    <molecule id="Q9ZVB5-1"/>
    <property type="nucleotide sequence ID" value="NM_129689.2"/>
</dbReference>
<dbReference type="RefSeq" id="NP_850349.1">
    <molecule id="Q9ZVB5-2"/>
    <property type="nucleotide sequence ID" value="NM_180018.1"/>
</dbReference>
<dbReference type="SMR" id="Q9ZVB5"/>
<dbReference type="BioGRID" id="4060">
    <property type="interactions" value="6"/>
</dbReference>
<dbReference type="FunCoup" id="Q9ZVB5">
    <property type="interactions" value="116"/>
</dbReference>
<dbReference type="IntAct" id="Q9ZVB5">
    <property type="interactions" value="6"/>
</dbReference>
<dbReference type="STRING" id="3702.Q9ZVB5"/>
<dbReference type="PaxDb" id="3702-AT2G41240.1"/>
<dbReference type="EnsemblPlants" id="AT2G41240.1">
    <molecule id="Q9ZVB5-1"/>
    <property type="protein sequence ID" value="AT2G41240.1"/>
    <property type="gene ID" value="AT2G41240"/>
</dbReference>
<dbReference type="EnsemblPlants" id="AT2G41240.2">
    <molecule id="Q9ZVB5-2"/>
    <property type="protein sequence ID" value="AT2G41240.2"/>
    <property type="gene ID" value="AT2G41240"/>
</dbReference>
<dbReference type="GeneID" id="818723"/>
<dbReference type="Gramene" id="AT2G41240.1">
    <molecule id="Q9ZVB5-1"/>
    <property type="protein sequence ID" value="AT2G41240.1"/>
    <property type="gene ID" value="AT2G41240"/>
</dbReference>
<dbReference type="Gramene" id="AT2G41240.2">
    <molecule id="Q9ZVB5-2"/>
    <property type="protein sequence ID" value="AT2G41240.2"/>
    <property type="gene ID" value="AT2G41240"/>
</dbReference>
<dbReference type="KEGG" id="ath:AT2G41240"/>
<dbReference type="Araport" id="AT2G41240"/>
<dbReference type="TAIR" id="AT2G41240">
    <property type="gene designation" value="BHLH100"/>
</dbReference>
<dbReference type="eggNOG" id="ENOG502RXMR">
    <property type="taxonomic scope" value="Eukaryota"/>
</dbReference>
<dbReference type="HOGENOM" id="CLU_089779_1_1_1"/>
<dbReference type="InParanoid" id="Q9ZVB5"/>
<dbReference type="OMA" id="TNQNAKP"/>
<dbReference type="OrthoDB" id="6106870at2759"/>
<dbReference type="PhylomeDB" id="Q9ZVB5"/>
<dbReference type="PRO" id="PR:Q9ZVB5"/>
<dbReference type="Proteomes" id="UP000006548">
    <property type="component" value="Chromosome 2"/>
</dbReference>
<dbReference type="ExpressionAtlas" id="Q9ZVB5">
    <property type="expression patterns" value="baseline and differential"/>
</dbReference>
<dbReference type="GO" id="GO:0005634">
    <property type="term" value="C:nucleus"/>
    <property type="evidence" value="ECO:0007669"/>
    <property type="project" value="UniProtKB-SubCell"/>
</dbReference>
<dbReference type="GO" id="GO:0003677">
    <property type="term" value="F:DNA binding"/>
    <property type="evidence" value="ECO:0007669"/>
    <property type="project" value="UniProtKB-KW"/>
</dbReference>
<dbReference type="GO" id="GO:0003700">
    <property type="term" value="F:DNA-binding transcription factor activity"/>
    <property type="evidence" value="ECO:0000250"/>
    <property type="project" value="TAIR"/>
</dbReference>
<dbReference type="GO" id="GO:0046983">
    <property type="term" value="F:protein dimerization activity"/>
    <property type="evidence" value="ECO:0007669"/>
    <property type="project" value="InterPro"/>
</dbReference>
<dbReference type="GO" id="GO:0010106">
    <property type="term" value="P:cellular response to iron ion starvation"/>
    <property type="evidence" value="ECO:0000270"/>
    <property type="project" value="TAIR"/>
</dbReference>
<dbReference type="GO" id="GO:0006355">
    <property type="term" value="P:regulation of DNA-templated transcription"/>
    <property type="evidence" value="ECO:0000304"/>
    <property type="project" value="TAIR"/>
</dbReference>
<dbReference type="GO" id="GO:0006357">
    <property type="term" value="P:regulation of transcription by RNA polymerase II"/>
    <property type="evidence" value="ECO:0007669"/>
    <property type="project" value="InterPro"/>
</dbReference>
<dbReference type="GO" id="GO:0009414">
    <property type="term" value="P:response to water deprivation"/>
    <property type="evidence" value="ECO:0000270"/>
    <property type="project" value="TAIR"/>
</dbReference>
<dbReference type="CDD" id="cd18914">
    <property type="entry name" value="bHLH_AtORG2_like"/>
    <property type="match status" value="1"/>
</dbReference>
<dbReference type="FunFam" id="4.10.280.10:FF:000074">
    <property type="entry name" value="Transcription factor ORG2"/>
    <property type="match status" value="1"/>
</dbReference>
<dbReference type="Gene3D" id="4.10.280.10">
    <property type="entry name" value="Helix-loop-helix DNA-binding domain"/>
    <property type="match status" value="1"/>
</dbReference>
<dbReference type="InterPro" id="IPR011598">
    <property type="entry name" value="bHLH_dom"/>
</dbReference>
<dbReference type="InterPro" id="IPR036638">
    <property type="entry name" value="HLH_DNA-bd_sf"/>
</dbReference>
<dbReference type="InterPro" id="IPR015660">
    <property type="entry name" value="MASH1/Ascl1a-like"/>
</dbReference>
<dbReference type="PANTHER" id="PTHR13935">
    <property type="entry name" value="ACHAETE-SCUTE TRANSCRIPTION FACTOR-RELATED"/>
    <property type="match status" value="1"/>
</dbReference>
<dbReference type="PANTHER" id="PTHR13935:SF100">
    <property type="entry name" value="TRANSCRIPTION FACTOR BHLH100"/>
    <property type="match status" value="1"/>
</dbReference>
<dbReference type="Pfam" id="PF00010">
    <property type="entry name" value="HLH"/>
    <property type="match status" value="1"/>
</dbReference>
<dbReference type="SMART" id="SM00353">
    <property type="entry name" value="HLH"/>
    <property type="match status" value="1"/>
</dbReference>
<dbReference type="SUPFAM" id="SSF47459">
    <property type="entry name" value="HLH, helix-loop-helix DNA-binding domain"/>
    <property type="match status" value="1"/>
</dbReference>
<dbReference type="PROSITE" id="PS50888">
    <property type="entry name" value="BHLH"/>
    <property type="match status" value="1"/>
</dbReference>